<proteinExistence type="evidence at protein level"/>
<evidence type="ECO:0000255" key="1">
    <source>
        <dbReference type="HAMAP-Rule" id="MF_01584"/>
    </source>
</evidence>
<evidence type="ECO:0007829" key="2">
    <source>
        <dbReference type="PDB" id="3BZ6"/>
    </source>
</evidence>
<dbReference type="EMBL" id="AE016853">
    <property type="protein sequence ID" value="AAO56188.1"/>
    <property type="molecule type" value="Genomic_DNA"/>
</dbReference>
<dbReference type="RefSeq" id="NP_792493.1">
    <property type="nucleotide sequence ID" value="NC_004578.1"/>
</dbReference>
<dbReference type="RefSeq" id="WP_005762646.1">
    <property type="nucleotide sequence ID" value="NC_004578.1"/>
</dbReference>
<dbReference type="PDB" id="3BZ6">
    <property type="method" value="X-ray"/>
    <property type="resolution" value="2.21 A"/>
    <property type="chains" value="A=1-180"/>
</dbReference>
<dbReference type="PDBsum" id="3BZ6"/>
<dbReference type="SMR" id="Q882E2"/>
<dbReference type="DNASU" id="1184338"/>
<dbReference type="GeneID" id="1184338"/>
<dbReference type="KEGG" id="pst:PSPTO_2686"/>
<dbReference type="PATRIC" id="fig|223283.9.peg.2738"/>
<dbReference type="eggNOG" id="COG3132">
    <property type="taxonomic scope" value="Bacteria"/>
</dbReference>
<dbReference type="HOGENOM" id="CLU_057831_2_0_6"/>
<dbReference type="OrthoDB" id="9784785at2"/>
<dbReference type="PhylomeDB" id="Q882E2"/>
<dbReference type="EvolutionaryTrace" id="Q882E2"/>
<dbReference type="Proteomes" id="UP000002515">
    <property type="component" value="Chromosome"/>
</dbReference>
<dbReference type="Gene3D" id="1.10.10.10">
    <property type="entry name" value="Winged helix-like DNA-binding domain superfamily/Winged helix DNA-binding domain"/>
    <property type="match status" value="2"/>
</dbReference>
<dbReference type="HAMAP" id="MF_01584">
    <property type="entry name" value="UPF0502"/>
    <property type="match status" value="1"/>
</dbReference>
<dbReference type="InterPro" id="IPR007432">
    <property type="entry name" value="DUF480"/>
</dbReference>
<dbReference type="InterPro" id="IPR036388">
    <property type="entry name" value="WH-like_DNA-bd_sf"/>
</dbReference>
<dbReference type="InterPro" id="IPR036390">
    <property type="entry name" value="WH_DNA-bd_sf"/>
</dbReference>
<dbReference type="PANTHER" id="PTHR38768">
    <property type="entry name" value="UPF0502 PROTEIN YCEH"/>
    <property type="match status" value="1"/>
</dbReference>
<dbReference type="PANTHER" id="PTHR38768:SF1">
    <property type="entry name" value="UPF0502 PROTEIN YCEH"/>
    <property type="match status" value="1"/>
</dbReference>
<dbReference type="Pfam" id="PF04337">
    <property type="entry name" value="DUF480"/>
    <property type="match status" value="1"/>
</dbReference>
<dbReference type="SUPFAM" id="SSF46785">
    <property type="entry name" value="Winged helix' DNA-binding domain"/>
    <property type="match status" value="2"/>
</dbReference>
<protein>
    <recommendedName>
        <fullName evidence="1">UPF0502 protein PSPTO_2686</fullName>
    </recommendedName>
</protein>
<keyword id="KW-0002">3D-structure</keyword>
<keyword id="KW-1185">Reference proteome</keyword>
<reference key="1">
    <citation type="journal article" date="2003" name="Proc. Natl. Acad. Sci. U.S.A.">
        <title>The complete genome sequence of the Arabidopsis and tomato pathogen Pseudomonas syringae pv. tomato DC3000.</title>
        <authorList>
            <person name="Buell C.R."/>
            <person name="Joardar V."/>
            <person name="Lindeberg M."/>
            <person name="Selengut J."/>
            <person name="Paulsen I.T."/>
            <person name="Gwinn M.L."/>
            <person name="Dodson R.J."/>
            <person name="DeBoy R.T."/>
            <person name="Durkin A.S."/>
            <person name="Kolonay J.F."/>
            <person name="Madupu R."/>
            <person name="Daugherty S.C."/>
            <person name="Brinkac L.M."/>
            <person name="Beanan M.J."/>
            <person name="Haft D.H."/>
            <person name="Nelson W.C."/>
            <person name="Davidsen T.M."/>
            <person name="Zafar N."/>
            <person name="Zhou L."/>
            <person name="Liu J."/>
            <person name="Yuan Q."/>
            <person name="Khouri H.M."/>
            <person name="Fedorova N.B."/>
            <person name="Tran B."/>
            <person name="Russell D."/>
            <person name="Berry K.J."/>
            <person name="Utterback T.R."/>
            <person name="Van Aken S.E."/>
            <person name="Feldblyum T.V."/>
            <person name="D'Ascenzo M."/>
            <person name="Deng W.-L."/>
            <person name="Ramos A.R."/>
            <person name="Alfano J.R."/>
            <person name="Cartinhour S."/>
            <person name="Chatterjee A.K."/>
            <person name="Delaney T.P."/>
            <person name="Lazarowitz S.G."/>
            <person name="Martin G.B."/>
            <person name="Schneider D.J."/>
            <person name="Tang X."/>
            <person name="Bender C.L."/>
            <person name="White O."/>
            <person name="Fraser C.M."/>
            <person name="Collmer A."/>
        </authorList>
    </citation>
    <scope>NUCLEOTIDE SEQUENCE [LARGE SCALE GENOMIC DNA]</scope>
    <source>
        <strain>ATCC BAA-871 / DC3000</strain>
    </source>
</reference>
<name>Y2686_PSESM</name>
<sequence length="221" mass="24455">MSIESSATPTTPNAEALQLNSTEVRILGCLIEKQATNPETYPLTLNALVIACNQKTSRDPVMNLTQGQVGQSLRALEGRGLTRLVMGSRADRWEHKVDKGLELVPAQVILTGLLLLRGPQTVSELLTRSNRMHDFEDSEQVVHQLERLIARGLATLVPRQSGQREDRYMHLIGDPEDLQDLLAARQQAPERGNAASPAATQRLDELEARIAALEERLARLE</sequence>
<accession>Q882E2</accession>
<feature type="chain" id="PRO_0000309410" description="UPF0502 protein PSPTO_2686">
    <location>
        <begin position="1"/>
        <end position="221"/>
    </location>
</feature>
<feature type="helix" evidence="2">
    <location>
        <begin position="21"/>
        <end position="36"/>
    </location>
</feature>
<feature type="helix" evidence="2">
    <location>
        <begin position="38"/>
        <end position="40"/>
    </location>
</feature>
<feature type="strand" evidence="2">
    <location>
        <begin position="42"/>
        <end position="44"/>
    </location>
</feature>
<feature type="helix" evidence="2">
    <location>
        <begin position="45"/>
        <end position="52"/>
    </location>
</feature>
<feature type="strand" evidence="2">
    <location>
        <begin position="55"/>
        <end position="57"/>
    </location>
</feature>
<feature type="helix" evidence="2">
    <location>
        <begin position="66"/>
        <end position="78"/>
    </location>
</feature>
<feature type="strand" evidence="2">
    <location>
        <begin position="81"/>
        <end position="85"/>
    </location>
</feature>
<feature type="strand" evidence="2">
    <location>
        <begin position="92"/>
        <end position="95"/>
    </location>
</feature>
<feature type="helix" evidence="2">
    <location>
        <begin position="97"/>
        <end position="101"/>
    </location>
</feature>
<feature type="helix" evidence="2">
    <location>
        <begin position="105"/>
        <end position="117"/>
    </location>
</feature>
<feature type="helix" evidence="2">
    <location>
        <begin position="122"/>
        <end position="129"/>
    </location>
</feature>
<feature type="turn" evidence="2">
    <location>
        <begin position="130"/>
        <end position="132"/>
    </location>
</feature>
<feature type="helix" evidence="2">
    <location>
        <begin position="138"/>
        <end position="150"/>
    </location>
</feature>
<feature type="strand" evidence="2">
    <location>
        <begin position="153"/>
        <end position="157"/>
    </location>
</feature>
<feature type="strand" evidence="2">
    <location>
        <begin position="167"/>
        <end position="173"/>
    </location>
</feature>
<feature type="helix" evidence="2">
    <location>
        <begin position="175"/>
        <end position="178"/>
    </location>
</feature>
<gene>
    <name type="ordered locus">PSPTO_2686</name>
</gene>
<organism>
    <name type="scientific">Pseudomonas syringae pv. tomato (strain ATCC BAA-871 / DC3000)</name>
    <dbReference type="NCBI Taxonomy" id="223283"/>
    <lineage>
        <taxon>Bacteria</taxon>
        <taxon>Pseudomonadati</taxon>
        <taxon>Pseudomonadota</taxon>
        <taxon>Gammaproteobacteria</taxon>
        <taxon>Pseudomonadales</taxon>
        <taxon>Pseudomonadaceae</taxon>
        <taxon>Pseudomonas</taxon>
    </lineage>
</organism>
<comment type="similarity">
    <text evidence="1">Belongs to the UPF0502 family.</text>
</comment>